<name>NUON_SALTI</name>
<protein>
    <recommendedName>
        <fullName evidence="1">NADH-quinone oxidoreductase subunit N</fullName>
        <ecNumber evidence="1">7.1.1.-</ecNumber>
    </recommendedName>
    <alternativeName>
        <fullName evidence="1">NADH dehydrogenase I subunit N</fullName>
    </alternativeName>
    <alternativeName>
        <fullName evidence="1">NDH-1 subunit N</fullName>
    </alternativeName>
</protein>
<evidence type="ECO:0000255" key="1">
    <source>
        <dbReference type="HAMAP-Rule" id="MF_00445"/>
    </source>
</evidence>
<evidence type="ECO:0000305" key="2"/>
<sequence>MTITPQHLIALLPLLIVGLTVVVVMLSIAWRRNHFLNATLSVIGLNAALVSLWFVGQAGAMDVTPLMRVDGFAMLYTGLVLLASLATCTFAYPWLEGYNDNQEEFYLLVLIASLGGILLANANHLAALFLGIELISLPLFGLIGYAFRQKRSLEASIKYTILSAAASSFLLFGMALVYAQSGNLSFEALGKSLGDGMLHEPLLLAGFGLMIVGLGFKLSLVPFHLWTPDVYQGAPAPVSTFLATASKIAIFGVVMRLFLYAPVGDSEAVRVVLGIIAFASIIFGNLMALSQTNIKRLLGYSSISHLGYLLVALIALQSGEMSMEAVGVYLAGYLFSSLGAFGVVSLMSSPFRGPDADSLYSYRGLFWHRPVLAAVMTVMMLSLAGIPMTLGFIGKFYVLAVGVQASLWWLVAAVVVGSAIGLYYYLRVAVSLYLHAPQQPGRDAPTNWQYSAGGIVVLISALLVLVLGVWPQPLISLVQLATPLM</sequence>
<comment type="function">
    <text evidence="1">NDH-1 shuttles electrons from NADH, via FMN and iron-sulfur (Fe-S) centers, to quinones in the respiratory chain. The immediate electron acceptor for the enzyme in this species is believed to be ubiquinone. Couples the redox reaction to proton translocation (for every two electrons transferred, four hydrogen ions are translocated across the cytoplasmic membrane), and thus conserves the redox energy in a proton gradient.</text>
</comment>
<comment type="catalytic activity">
    <reaction evidence="1">
        <text>a quinone + NADH + 5 H(+)(in) = a quinol + NAD(+) + 4 H(+)(out)</text>
        <dbReference type="Rhea" id="RHEA:57888"/>
        <dbReference type="ChEBI" id="CHEBI:15378"/>
        <dbReference type="ChEBI" id="CHEBI:24646"/>
        <dbReference type="ChEBI" id="CHEBI:57540"/>
        <dbReference type="ChEBI" id="CHEBI:57945"/>
        <dbReference type="ChEBI" id="CHEBI:132124"/>
    </reaction>
</comment>
<comment type="subunit">
    <text evidence="1">NDH-1 is composed of 13 different subunits. Subunits NuoA, H, J, K, L, M, N constitute the membrane sector of the complex.</text>
</comment>
<comment type="subcellular location">
    <subcellularLocation>
        <location evidence="1">Cell inner membrane</location>
        <topology evidence="1">Multi-pass membrane protein</topology>
    </subcellularLocation>
</comment>
<comment type="similarity">
    <text evidence="1">Belongs to the complex I subunit 2 family.</text>
</comment>
<comment type="sequence caution" evidence="2">
    <conflict type="erroneous initiation">
        <sequence resource="EMBL-CDS" id="AAO68254"/>
    </conflict>
</comment>
<comment type="sequence caution" evidence="2">
    <conflict type="erroneous initiation">
        <sequence resource="EMBL-CDS" id="CAD07548"/>
    </conflict>
</comment>
<dbReference type="EC" id="7.1.1.-" evidence="1"/>
<dbReference type="EMBL" id="AL513382">
    <property type="protein sequence ID" value="CAD07548.1"/>
    <property type="status" value="ALT_INIT"/>
    <property type="molecule type" value="Genomic_DNA"/>
</dbReference>
<dbReference type="EMBL" id="AE014613">
    <property type="protein sequence ID" value="AAO68254.1"/>
    <property type="status" value="ALT_INIT"/>
    <property type="molecule type" value="Genomic_DNA"/>
</dbReference>
<dbReference type="RefSeq" id="NP_456858.3">
    <property type="nucleotide sequence ID" value="NC_003198.1"/>
</dbReference>
<dbReference type="RefSeq" id="WP_000156669.1">
    <property type="nucleotide sequence ID" value="NZ_WSUR01000039.1"/>
</dbReference>
<dbReference type="SMR" id="Q8Z530"/>
<dbReference type="STRING" id="220341.gene:17586445"/>
<dbReference type="KEGG" id="stt:t0548"/>
<dbReference type="KEGG" id="sty:STY2546"/>
<dbReference type="PATRIC" id="fig|220341.7.peg.2576"/>
<dbReference type="eggNOG" id="COG1007">
    <property type="taxonomic scope" value="Bacteria"/>
</dbReference>
<dbReference type="HOGENOM" id="CLU_007100_1_5_6"/>
<dbReference type="OMA" id="LMFFSEP"/>
<dbReference type="OrthoDB" id="9768329at2"/>
<dbReference type="Proteomes" id="UP000000541">
    <property type="component" value="Chromosome"/>
</dbReference>
<dbReference type="Proteomes" id="UP000002670">
    <property type="component" value="Chromosome"/>
</dbReference>
<dbReference type="GO" id="GO:0005886">
    <property type="term" value="C:plasma membrane"/>
    <property type="evidence" value="ECO:0007669"/>
    <property type="project" value="UniProtKB-SubCell"/>
</dbReference>
<dbReference type="GO" id="GO:0008137">
    <property type="term" value="F:NADH dehydrogenase (ubiquinone) activity"/>
    <property type="evidence" value="ECO:0007669"/>
    <property type="project" value="InterPro"/>
</dbReference>
<dbReference type="GO" id="GO:0050136">
    <property type="term" value="F:NADH:ubiquinone reductase (non-electrogenic) activity"/>
    <property type="evidence" value="ECO:0007669"/>
    <property type="project" value="UniProtKB-UniRule"/>
</dbReference>
<dbReference type="GO" id="GO:0048038">
    <property type="term" value="F:quinone binding"/>
    <property type="evidence" value="ECO:0007669"/>
    <property type="project" value="UniProtKB-KW"/>
</dbReference>
<dbReference type="GO" id="GO:0042773">
    <property type="term" value="P:ATP synthesis coupled electron transport"/>
    <property type="evidence" value="ECO:0007669"/>
    <property type="project" value="InterPro"/>
</dbReference>
<dbReference type="HAMAP" id="MF_00445">
    <property type="entry name" value="NDH1_NuoN_1"/>
    <property type="match status" value="1"/>
</dbReference>
<dbReference type="InterPro" id="IPR010096">
    <property type="entry name" value="NADH-Q_OxRdtase_suN/2"/>
</dbReference>
<dbReference type="InterPro" id="IPR001750">
    <property type="entry name" value="ND/Mrp_TM"/>
</dbReference>
<dbReference type="NCBIfam" id="TIGR01770">
    <property type="entry name" value="NDH_I_N"/>
    <property type="match status" value="1"/>
</dbReference>
<dbReference type="NCBIfam" id="NF004439">
    <property type="entry name" value="PRK05777.1-1"/>
    <property type="match status" value="1"/>
</dbReference>
<dbReference type="PANTHER" id="PTHR22773">
    <property type="entry name" value="NADH DEHYDROGENASE"/>
    <property type="match status" value="1"/>
</dbReference>
<dbReference type="Pfam" id="PF00361">
    <property type="entry name" value="Proton_antipo_M"/>
    <property type="match status" value="1"/>
</dbReference>
<proteinExistence type="inferred from homology"/>
<reference key="1">
    <citation type="journal article" date="2001" name="Nature">
        <title>Complete genome sequence of a multiple drug resistant Salmonella enterica serovar Typhi CT18.</title>
        <authorList>
            <person name="Parkhill J."/>
            <person name="Dougan G."/>
            <person name="James K.D."/>
            <person name="Thomson N.R."/>
            <person name="Pickard D."/>
            <person name="Wain J."/>
            <person name="Churcher C.M."/>
            <person name="Mungall K.L."/>
            <person name="Bentley S.D."/>
            <person name="Holden M.T.G."/>
            <person name="Sebaihia M."/>
            <person name="Baker S."/>
            <person name="Basham D."/>
            <person name="Brooks K."/>
            <person name="Chillingworth T."/>
            <person name="Connerton P."/>
            <person name="Cronin A."/>
            <person name="Davis P."/>
            <person name="Davies R.M."/>
            <person name="Dowd L."/>
            <person name="White N."/>
            <person name="Farrar J."/>
            <person name="Feltwell T."/>
            <person name="Hamlin N."/>
            <person name="Haque A."/>
            <person name="Hien T.T."/>
            <person name="Holroyd S."/>
            <person name="Jagels K."/>
            <person name="Krogh A."/>
            <person name="Larsen T.S."/>
            <person name="Leather S."/>
            <person name="Moule S."/>
            <person name="O'Gaora P."/>
            <person name="Parry C."/>
            <person name="Quail M.A."/>
            <person name="Rutherford K.M."/>
            <person name="Simmonds M."/>
            <person name="Skelton J."/>
            <person name="Stevens K."/>
            <person name="Whitehead S."/>
            <person name="Barrell B.G."/>
        </authorList>
    </citation>
    <scope>NUCLEOTIDE SEQUENCE [LARGE SCALE GENOMIC DNA]</scope>
    <source>
        <strain>CT18</strain>
    </source>
</reference>
<reference key="2">
    <citation type="journal article" date="2003" name="J. Bacteriol.">
        <title>Comparative genomics of Salmonella enterica serovar Typhi strains Ty2 and CT18.</title>
        <authorList>
            <person name="Deng W."/>
            <person name="Liou S.-R."/>
            <person name="Plunkett G. III"/>
            <person name="Mayhew G.F."/>
            <person name="Rose D.J."/>
            <person name="Burland V."/>
            <person name="Kodoyianni V."/>
            <person name="Schwartz D.C."/>
            <person name="Blattner F.R."/>
        </authorList>
    </citation>
    <scope>NUCLEOTIDE SEQUENCE [LARGE SCALE GENOMIC DNA]</scope>
    <source>
        <strain>ATCC 700931 / Ty2</strain>
    </source>
</reference>
<keyword id="KW-0997">Cell inner membrane</keyword>
<keyword id="KW-1003">Cell membrane</keyword>
<keyword id="KW-0472">Membrane</keyword>
<keyword id="KW-0520">NAD</keyword>
<keyword id="KW-0874">Quinone</keyword>
<keyword id="KW-1278">Translocase</keyword>
<keyword id="KW-0812">Transmembrane</keyword>
<keyword id="KW-1133">Transmembrane helix</keyword>
<keyword id="KW-0813">Transport</keyword>
<keyword id="KW-0830">Ubiquinone</keyword>
<gene>
    <name evidence="1" type="primary">nuoN</name>
    <name type="ordered locus">STY2546</name>
    <name type="ordered locus">t0548</name>
</gene>
<feature type="chain" id="PRO_0000249447" description="NADH-quinone oxidoreductase subunit N">
    <location>
        <begin position="1"/>
        <end position="485"/>
    </location>
</feature>
<feature type="transmembrane region" description="Helical" evidence="1">
    <location>
        <begin position="8"/>
        <end position="28"/>
    </location>
</feature>
<feature type="transmembrane region" description="Helical" evidence="1">
    <location>
        <begin position="35"/>
        <end position="55"/>
    </location>
</feature>
<feature type="transmembrane region" description="Helical" evidence="1">
    <location>
        <begin position="71"/>
        <end position="91"/>
    </location>
</feature>
<feature type="transmembrane region" description="Helical" evidence="1">
    <location>
        <begin position="105"/>
        <end position="125"/>
    </location>
</feature>
<feature type="transmembrane region" description="Helical" evidence="1">
    <location>
        <begin position="127"/>
        <end position="147"/>
    </location>
</feature>
<feature type="transmembrane region" description="Helical" evidence="1">
    <location>
        <begin position="159"/>
        <end position="179"/>
    </location>
</feature>
<feature type="transmembrane region" description="Helical" evidence="1">
    <location>
        <begin position="203"/>
        <end position="223"/>
    </location>
</feature>
<feature type="transmembrane region" description="Helical" evidence="1">
    <location>
        <begin position="235"/>
        <end position="255"/>
    </location>
</feature>
<feature type="transmembrane region" description="Helical" evidence="1">
    <location>
        <begin position="271"/>
        <end position="291"/>
    </location>
</feature>
<feature type="transmembrane region" description="Helical" evidence="1">
    <location>
        <begin position="297"/>
        <end position="317"/>
    </location>
</feature>
<feature type="transmembrane region" description="Helical" evidence="1">
    <location>
        <begin position="326"/>
        <end position="346"/>
    </location>
</feature>
<feature type="transmembrane region" description="Helical" evidence="1">
    <location>
        <begin position="373"/>
        <end position="393"/>
    </location>
</feature>
<feature type="transmembrane region" description="Helical" evidence="1">
    <location>
        <begin position="408"/>
        <end position="430"/>
    </location>
</feature>
<feature type="transmembrane region" description="Helical" evidence="1">
    <location>
        <begin position="455"/>
        <end position="475"/>
    </location>
</feature>
<organism>
    <name type="scientific">Salmonella typhi</name>
    <dbReference type="NCBI Taxonomy" id="90370"/>
    <lineage>
        <taxon>Bacteria</taxon>
        <taxon>Pseudomonadati</taxon>
        <taxon>Pseudomonadota</taxon>
        <taxon>Gammaproteobacteria</taxon>
        <taxon>Enterobacterales</taxon>
        <taxon>Enterobacteriaceae</taxon>
        <taxon>Salmonella</taxon>
    </lineage>
</organism>
<accession>Q8Z530</accession>
<accession>Q7CB92</accession>